<sequence length="760" mass="88654">MNWRFVELLYFLFVWGRISVQPSHQEPAGTDQHVSKEFDWLISDRGPFHHSRSYLSFVERHRQGFTTRYKIYREFARWKVRNTAIERRDLVRHPVPLMPEFQRSIRLLGRRPTTQQFIDTIIKKYGTHLLISATLGGEEALTMYMDKSRLDRKSGNATQSVEALHQLASSYFVDRDGTMRRLHEIQISTGAIKVTETRTGLLGCNSYDNLDSVSSVLLQSTESKLHLQGLQIIFPQYLQEKFVQSALSYIMCNGEGEYVCQNSQCRCQCAEEFPQCNCPITDIQIMEFTLANMAKAWTEAYKDLENSDEFKSFMKRLPSNHFLTIGSIHQHWGNDWDLQSRYKLLQSATEAQRQKIQRTARKLFGLSVRCRHNPNHQLPRERTIQQWLARVQSLLYCNENGFWGTFLESQRSCVCHGSTTLCQRPIPCIIGGNNSCAMCSLANISLCGSCNKGYKLYRGRCEPQNVDSERSEQFISFETDLDFQDLELKYLLQKMDSRLYVHTTFISNEIRLDTFFDLRWRKRMSLTLKSNKNRMDFIHMVIGMSMRICQMRNSSLDPMFFVYVNPFSGSHSEGWNMPFGEFGYPRWEKIRLQNSQCYNWTLLLGNRWKTFFETVHIYLRSRTRLPTLRNETGQGPVDLSDPSKRQFYIKISDVQVFGYSLRFNADLLRSAVQQVNQSYTQGGQFYSSSSVMLLMLDIRDRINRLAPPVAPGKPQLDLFSCMLKHRLKLTNSEIIRVNHALDLYNTEILKQSDQMTAKLC</sequence>
<protein>
    <recommendedName>
        <fullName>BMP/retinoic acid-inducible neural-specific protein 1</fullName>
    </recommendedName>
    <alternativeName>
        <fullName>Deleted in bladder cancer protein 1 homolog</fullName>
    </alternativeName>
</protein>
<name>BRNP1_RAT</name>
<dbReference type="EMBL" id="AB051356">
    <property type="protein sequence ID" value="BAB55642.1"/>
    <property type="molecule type" value="mRNA"/>
</dbReference>
<dbReference type="RefSeq" id="NP_536730.1">
    <property type="nucleotide sequence ID" value="NM_080482.2"/>
</dbReference>
<dbReference type="FunCoup" id="Q925T8">
    <property type="interactions" value="1123"/>
</dbReference>
<dbReference type="STRING" id="10116.ENSRNOP00000007578"/>
<dbReference type="GlyCosmos" id="Q925T8">
    <property type="glycosylation" value="7 sites, No reported glycans"/>
</dbReference>
<dbReference type="GlyGen" id="Q925T8">
    <property type="glycosylation" value="7 sites"/>
</dbReference>
<dbReference type="PhosphoSitePlus" id="Q925T8"/>
<dbReference type="PaxDb" id="10116-ENSRNOP00000007578"/>
<dbReference type="GeneID" id="140610"/>
<dbReference type="KEGG" id="rno:140610"/>
<dbReference type="UCSC" id="RGD:708519">
    <property type="organism name" value="rat"/>
</dbReference>
<dbReference type="AGR" id="RGD:708519"/>
<dbReference type="CTD" id="1620"/>
<dbReference type="RGD" id="708519">
    <property type="gene designation" value="Brinp1"/>
</dbReference>
<dbReference type="eggNOG" id="ENOG502QT9H">
    <property type="taxonomic scope" value="Eukaryota"/>
</dbReference>
<dbReference type="InParanoid" id="Q925T8"/>
<dbReference type="OrthoDB" id="8503728at2759"/>
<dbReference type="PhylomeDB" id="Q925T8"/>
<dbReference type="PRO" id="PR:Q925T8"/>
<dbReference type="Proteomes" id="UP000002494">
    <property type="component" value="Unplaced"/>
</dbReference>
<dbReference type="GO" id="GO:0005737">
    <property type="term" value="C:cytoplasm"/>
    <property type="evidence" value="ECO:0000250"/>
    <property type="project" value="UniProtKB"/>
</dbReference>
<dbReference type="GO" id="GO:0030425">
    <property type="term" value="C:dendrite"/>
    <property type="evidence" value="ECO:0000318"/>
    <property type="project" value="GO_Central"/>
</dbReference>
<dbReference type="GO" id="GO:0098978">
    <property type="term" value="C:glutamatergic synapse"/>
    <property type="evidence" value="ECO:0000266"/>
    <property type="project" value="RGD"/>
</dbReference>
<dbReference type="GO" id="GO:0043025">
    <property type="term" value="C:neuronal cell body"/>
    <property type="evidence" value="ECO:0000318"/>
    <property type="project" value="GO_Central"/>
</dbReference>
<dbReference type="GO" id="GO:0045202">
    <property type="term" value="C:synapse"/>
    <property type="evidence" value="ECO:0000266"/>
    <property type="project" value="RGD"/>
</dbReference>
<dbReference type="GO" id="GO:0001662">
    <property type="term" value="P:behavioral fear response"/>
    <property type="evidence" value="ECO:0000266"/>
    <property type="project" value="RGD"/>
</dbReference>
<dbReference type="GO" id="GO:0007420">
    <property type="term" value="P:brain development"/>
    <property type="evidence" value="ECO:0000266"/>
    <property type="project" value="RGD"/>
</dbReference>
<dbReference type="GO" id="GO:0008283">
    <property type="term" value="P:cell population proliferation"/>
    <property type="evidence" value="ECO:0000266"/>
    <property type="project" value="RGD"/>
</dbReference>
<dbReference type="GO" id="GO:0071300">
    <property type="term" value="P:cellular response to retinoic acid"/>
    <property type="evidence" value="ECO:0000266"/>
    <property type="project" value="RGD"/>
</dbReference>
<dbReference type="GO" id="GO:0021954">
    <property type="term" value="P:central nervous system neuron development"/>
    <property type="evidence" value="ECO:0000266"/>
    <property type="project" value="RGD"/>
</dbReference>
<dbReference type="GO" id="GO:0021953">
    <property type="term" value="P:central nervous system neuron differentiation"/>
    <property type="evidence" value="ECO:0000318"/>
    <property type="project" value="GO_Central"/>
</dbReference>
<dbReference type="GO" id="GO:0035640">
    <property type="term" value="P:exploration behavior"/>
    <property type="evidence" value="ECO:0000266"/>
    <property type="project" value="RGD"/>
</dbReference>
<dbReference type="GO" id="GO:0010467">
    <property type="term" value="P:gene expression"/>
    <property type="evidence" value="ECO:0000266"/>
    <property type="project" value="RGD"/>
</dbReference>
<dbReference type="GO" id="GO:0048873">
    <property type="term" value="P:homeostasis of number of cells within a tissue"/>
    <property type="evidence" value="ECO:0000266"/>
    <property type="project" value="RGD"/>
</dbReference>
<dbReference type="GO" id="GO:0042711">
    <property type="term" value="P:maternal behavior"/>
    <property type="evidence" value="ECO:0000266"/>
    <property type="project" value="RGD"/>
</dbReference>
<dbReference type="GO" id="GO:0045930">
    <property type="term" value="P:negative regulation of mitotic cell cycle"/>
    <property type="evidence" value="ECO:0000266"/>
    <property type="project" value="RGD"/>
</dbReference>
<dbReference type="GO" id="GO:0050768">
    <property type="term" value="P:negative regulation of neurogenesis"/>
    <property type="evidence" value="ECO:0000266"/>
    <property type="project" value="RGD"/>
</dbReference>
<dbReference type="GO" id="GO:0022008">
    <property type="term" value="P:neurogenesis"/>
    <property type="evidence" value="ECO:0000266"/>
    <property type="project" value="RGD"/>
</dbReference>
<dbReference type="GO" id="GO:0045666">
    <property type="term" value="P:positive regulation of neuron differentiation"/>
    <property type="evidence" value="ECO:0007669"/>
    <property type="project" value="InterPro"/>
</dbReference>
<dbReference type="GO" id="GO:0010498">
    <property type="term" value="P:proteasomal protein catabolic process"/>
    <property type="evidence" value="ECO:0000266"/>
    <property type="project" value="RGD"/>
</dbReference>
<dbReference type="GO" id="GO:0050821">
    <property type="term" value="P:protein stabilization"/>
    <property type="evidence" value="ECO:0000266"/>
    <property type="project" value="RGD"/>
</dbReference>
<dbReference type="GO" id="GO:0007614">
    <property type="term" value="P:short-term memory"/>
    <property type="evidence" value="ECO:0000266"/>
    <property type="project" value="RGD"/>
</dbReference>
<dbReference type="GO" id="GO:0035176">
    <property type="term" value="P:social behavior"/>
    <property type="evidence" value="ECO:0000266"/>
    <property type="project" value="RGD"/>
</dbReference>
<dbReference type="GO" id="GO:0071625">
    <property type="term" value="P:vocalization behavior"/>
    <property type="evidence" value="ECO:0000266"/>
    <property type="project" value="RGD"/>
</dbReference>
<dbReference type="InterPro" id="IPR033237">
    <property type="entry name" value="BRINP"/>
</dbReference>
<dbReference type="InterPro" id="IPR020864">
    <property type="entry name" value="MACPF"/>
</dbReference>
<dbReference type="PANTHER" id="PTHR15564:SF7">
    <property type="entry name" value="BMP_RETINOIC ACID-INDUCIBLE NEURAL-SPECIFIC PROTEIN 1"/>
    <property type="match status" value="1"/>
</dbReference>
<dbReference type="PANTHER" id="PTHR15564">
    <property type="entry name" value="MACPF DOMAIN-CONTAINING PROTEIN"/>
    <property type="match status" value="1"/>
</dbReference>
<dbReference type="Pfam" id="PF19052">
    <property type="entry name" value="BRINP"/>
    <property type="match status" value="1"/>
</dbReference>
<dbReference type="Pfam" id="PF25415">
    <property type="entry name" value="EGF_BRNP1-3"/>
    <property type="match status" value="1"/>
</dbReference>
<dbReference type="Pfam" id="PF01823">
    <property type="entry name" value="MACPF"/>
    <property type="match status" value="1"/>
</dbReference>
<dbReference type="SMART" id="SM00457">
    <property type="entry name" value="MACPF"/>
    <property type="match status" value="1"/>
</dbReference>
<comment type="function">
    <text evidence="2">Plays a role in neurogenesis and brain development. May suppress cell cycle progression in postmitotic neurons by inhibiting G1/S transition.</text>
</comment>
<comment type="subcellular location">
    <subcellularLocation>
        <location evidence="1">Cytoplasm</location>
    </subcellularLocation>
</comment>
<comment type="similarity">
    <text evidence="4">Belongs to the BRINP family.</text>
</comment>
<keyword id="KW-0131">Cell cycle</keyword>
<keyword id="KW-0963">Cytoplasm</keyword>
<keyword id="KW-0325">Glycoprotein</keyword>
<keyword id="KW-0338">Growth arrest</keyword>
<keyword id="KW-0524">Neurogenesis</keyword>
<keyword id="KW-1185">Reference proteome</keyword>
<keyword id="KW-0732">Signal</keyword>
<accession>Q925T8</accession>
<gene>
    <name type="primary">Brinp1</name>
    <name type="synonym">Brinp</name>
    <name type="synonym">Dbc1</name>
    <name type="synonym">Dbccr1</name>
    <name type="synonym">Fam5a</name>
</gene>
<proteinExistence type="evidence at transcript level"/>
<organism>
    <name type="scientific">Rattus norvegicus</name>
    <name type="common">Rat</name>
    <dbReference type="NCBI Taxonomy" id="10116"/>
    <lineage>
        <taxon>Eukaryota</taxon>
        <taxon>Metazoa</taxon>
        <taxon>Chordata</taxon>
        <taxon>Craniata</taxon>
        <taxon>Vertebrata</taxon>
        <taxon>Euteleostomi</taxon>
        <taxon>Mammalia</taxon>
        <taxon>Eutheria</taxon>
        <taxon>Euarchontoglires</taxon>
        <taxon>Glires</taxon>
        <taxon>Rodentia</taxon>
        <taxon>Myomorpha</taxon>
        <taxon>Muroidea</taxon>
        <taxon>Muridae</taxon>
        <taxon>Murinae</taxon>
        <taxon>Rattus</taxon>
    </lineage>
</organism>
<feature type="signal peptide" evidence="3">
    <location>
        <begin position="1"/>
        <end position="16"/>
    </location>
</feature>
<feature type="chain" id="PRO_0000045768" description="BMP/retinoic acid-inducible neural-specific protein 1">
    <location>
        <begin position="17"/>
        <end position="760"/>
    </location>
</feature>
<feature type="domain" description="MACPF">
    <location>
        <begin position="68"/>
        <end position="251"/>
    </location>
</feature>
<feature type="glycosylation site" description="N-linked (GlcNAc...) asparagine" evidence="3">
    <location>
        <position position="156"/>
    </location>
</feature>
<feature type="glycosylation site" description="N-linked (GlcNAc...) asparagine" evidence="3">
    <location>
        <position position="433"/>
    </location>
</feature>
<feature type="glycosylation site" description="N-linked (GlcNAc...) asparagine" evidence="3">
    <location>
        <position position="443"/>
    </location>
</feature>
<feature type="glycosylation site" description="N-linked (GlcNAc...) asparagine" evidence="3">
    <location>
        <position position="553"/>
    </location>
</feature>
<feature type="glycosylation site" description="N-linked (GlcNAc...) asparagine" evidence="3">
    <location>
        <position position="599"/>
    </location>
</feature>
<feature type="glycosylation site" description="N-linked (GlcNAc...) asparagine" evidence="3">
    <location>
        <position position="630"/>
    </location>
</feature>
<feature type="glycosylation site" description="N-linked (GlcNAc...) asparagine" evidence="3">
    <location>
        <position position="676"/>
    </location>
</feature>
<reference key="1">
    <citation type="journal article" date="2004" name="Brain Res. Mol. Brain Res.">
        <title>Identification and characterization of novel developmentally regulated neural-specific proteins, BRINP family.</title>
        <authorList>
            <person name="Kawano H."/>
            <person name="Nakatani T."/>
            <person name="Mori T."/>
            <person name="Ueno S."/>
            <person name="Fukaya M."/>
            <person name="Abe A."/>
            <person name="Kobayashi M."/>
            <person name="Toda F."/>
            <person name="Watanabe M."/>
            <person name="Matsuoka I."/>
        </authorList>
    </citation>
    <scope>NUCLEOTIDE SEQUENCE [MRNA]</scope>
    <source>
        <tissue>Brain</tissue>
    </source>
</reference>
<evidence type="ECO:0000250" key="1">
    <source>
        <dbReference type="UniProtKB" id="O60477"/>
    </source>
</evidence>
<evidence type="ECO:0000250" key="2">
    <source>
        <dbReference type="UniProtKB" id="Q920P3"/>
    </source>
</evidence>
<evidence type="ECO:0000255" key="3"/>
<evidence type="ECO:0000305" key="4"/>